<reference key="1">
    <citation type="journal article" date="2002" name="J. Bacteriol.">
        <title>Whole-genome comparison of Mycobacterium tuberculosis clinical and laboratory strains.</title>
        <authorList>
            <person name="Fleischmann R.D."/>
            <person name="Alland D."/>
            <person name="Eisen J.A."/>
            <person name="Carpenter L."/>
            <person name="White O."/>
            <person name="Peterson J.D."/>
            <person name="DeBoy R.T."/>
            <person name="Dodson R.J."/>
            <person name="Gwinn M.L."/>
            <person name="Haft D.H."/>
            <person name="Hickey E.K."/>
            <person name="Kolonay J.F."/>
            <person name="Nelson W.C."/>
            <person name="Umayam L.A."/>
            <person name="Ermolaeva M.D."/>
            <person name="Salzberg S.L."/>
            <person name="Delcher A."/>
            <person name="Utterback T.R."/>
            <person name="Weidman J.F."/>
            <person name="Khouri H.M."/>
            <person name="Gill J."/>
            <person name="Mikula A."/>
            <person name="Bishai W."/>
            <person name="Jacobs W.R. Jr."/>
            <person name="Venter J.C."/>
            <person name="Fraser C.M."/>
        </authorList>
    </citation>
    <scope>NUCLEOTIDE SEQUENCE [LARGE SCALE GENOMIC DNA]</scope>
    <source>
        <strain>CDC 1551 / Oshkosh</strain>
    </source>
</reference>
<evidence type="ECO:0000255" key="1"/>
<evidence type="ECO:0000256" key="2">
    <source>
        <dbReference type="SAM" id="MobiDB-lite"/>
    </source>
</evidence>
<evidence type="ECO:0000305" key="3"/>
<keyword id="KW-0472">Membrane</keyword>
<keyword id="KW-1185">Reference proteome</keyword>
<keyword id="KW-0812">Transmembrane</keyword>
<keyword id="KW-1133">Transmembrane helix</keyword>
<organism>
    <name type="scientific">Mycobacterium tuberculosis (strain CDC 1551 / Oshkosh)</name>
    <dbReference type="NCBI Taxonomy" id="83331"/>
    <lineage>
        <taxon>Bacteria</taxon>
        <taxon>Bacillati</taxon>
        <taxon>Actinomycetota</taxon>
        <taxon>Actinomycetes</taxon>
        <taxon>Mycobacteriales</taxon>
        <taxon>Mycobacteriaceae</taxon>
        <taxon>Mycobacterium</taxon>
        <taxon>Mycobacterium tuberculosis complex</taxon>
    </lineage>
</organism>
<accession>P9WLJ4</accession>
<accession>L0TA69</accession>
<accession>P64939</accession>
<accession>Q10700</accession>
<name>Y2091_MYCTO</name>
<proteinExistence type="predicted"/>
<dbReference type="EMBL" id="AE000516">
    <property type="protein sequence ID" value="AAK46433.1"/>
    <property type="molecule type" value="Genomic_DNA"/>
</dbReference>
<dbReference type="PIR" id="F70767">
    <property type="entry name" value="F70767"/>
</dbReference>
<dbReference type="RefSeq" id="WP_003410762.1">
    <property type="nucleotide sequence ID" value="NZ_KK341227.1"/>
</dbReference>
<dbReference type="SMR" id="P9WLJ4"/>
<dbReference type="KEGG" id="mtc:MT2152"/>
<dbReference type="PATRIC" id="fig|83331.31.peg.2321"/>
<dbReference type="HOGENOM" id="CLU_076325_0_0_11"/>
<dbReference type="Proteomes" id="UP000001020">
    <property type="component" value="Chromosome"/>
</dbReference>
<dbReference type="GO" id="GO:0016020">
    <property type="term" value="C:membrane"/>
    <property type="evidence" value="ECO:0007669"/>
    <property type="project" value="UniProtKB-SubCell"/>
</dbReference>
<dbReference type="InterPro" id="IPR025637">
    <property type="entry name" value="DUF4333"/>
</dbReference>
<dbReference type="Pfam" id="PF14230">
    <property type="entry name" value="DUF4333"/>
    <property type="match status" value="1"/>
</dbReference>
<gene>
    <name type="ordered locus">MT2152</name>
</gene>
<feature type="chain" id="PRO_0000427468" description="Uncharacterized protein MT2152">
    <location>
        <begin position="1"/>
        <end position="244"/>
    </location>
</feature>
<feature type="transmembrane region" description="Helical" evidence="1">
    <location>
        <begin position="136"/>
        <end position="156"/>
    </location>
</feature>
<feature type="region of interest" description="Disordered" evidence="2">
    <location>
        <begin position="1"/>
        <end position="127"/>
    </location>
</feature>
<feature type="compositionally biased region" description="Polar residues" evidence="2">
    <location>
        <begin position="34"/>
        <end position="43"/>
    </location>
</feature>
<feature type="compositionally biased region" description="Low complexity" evidence="2">
    <location>
        <begin position="45"/>
        <end position="75"/>
    </location>
</feature>
<feature type="compositionally biased region" description="Low complexity" evidence="2">
    <location>
        <begin position="88"/>
        <end position="127"/>
    </location>
</feature>
<protein>
    <recommendedName>
        <fullName>Uncharacterized protein MT2152</fullName>
    </recommendedName>
</protein>
<sequence length="244" mass="26020">MSGPQGSDPRQPWQPPGQGADHSSDPTVAAGYPWQQQPTQEATWQAPAYTPQYQQPADPAYPQQYPQPTPGYAQPEQFGAQPTQLGVPGQYGQYQQPGQYGQPGQYGQPGQYAPPGQYPGQYGPYGQSGQGSKRSVAVIGGVIAVMAVLFIGAVLILGFWAPGFFVTTKLDVIKAQAGVQQVLTDETTGYGAKNVKDVKCNNGSDPTVKKGATFECTVSIDGTSKRVTVTFQDNKGTYEVGRPQ</sequence>
<comment type="subcellular location">
    <subcellularLocation>
        <location evidence="3">Membrane</location>
        <topology evidence="3">Single-pass membrane protein</topology>
    </subcellularLocation>
</comment>